<reference evidence="3" key="1">
    <citation type="journal article" date="2007" name="Nature">
        <title>Evolution of genes and genomes on the Drosophila phylogeny.</title>
        <authorList>
            <consortium name="Drosophila 12 genomes consortium"/>
        </authorList>
    </citation>
    <scope>NUCLEOTIDE SEQUENCE [LARGE SCALE GENOMIC DNA]</scope>
    <source>
        <strain evidence="3">Tai18E2 / Tucson 14021-0261.01</strain>
    </source>
</reference>
<gene>
    <name evidence="1" type="primary">TotM</name>
    <name type="ORF">GE25388</name>
</gene>
<sequence length="131" mass="14881">MNPTVYLSCLVVFSLFYLGKAQAENDDEFATEKQRLLRVYGDSSVDEATRYRNVDDLVKFYDKYSTLLPLKPDLTQRAQDLVRRYKEESARVVLVDGAPAQGGFWLPLVKLLIVQLGVEIASEGFKRAIES</sequence>
<name>TOTM_DROYA</name>
<keyword id="KW-0391">Immunity</keyword>
<keyword id="KW-0399">Innate immunity</keyword>
<keyword id="KW-0964">Secreted</keyword>
<keyword id="KW-0732">Signal</keyword>
<accession>B4P071</accession>
<organism>
    <name type="scientific">Drosophila yakuba</name>
    <name type="common">Fruit fly</name>
    <dbReference type="NCBI Taxonomy" id="7245"/>
    <lineage>
        <taxon>Eukaryota</taxon>
        <taxon>Metazoa</taxon>
        <taxon>Ecdysozoa</taxon>
        <taxon>Arthropoda</taxon>
        <taxon>Hexapoda</taxon>
        <taxon>Insecta</taxon>
        <taxon>Pterygota</taxon>
        <taxon>Neoptera</taxon>
        <taxon>Endopterygota</taxon>
        <taxon>Diptera</taxon>
        <taxon>Brachycera</taxon>
        <taxon>Muscomorpha</taxon>
        <taxon>Ephydroidea</taxon>
        <taxon>Drosophilidae</taxon>
        <taxon>Drosophila</taxon>
        <taxon>Sophophora</taxon>
    </lineage>
</organism>
<feature type="signal peptide" evidence="2">
    <location>
        <begin position="1"/>
        <end position="23"/>
    </location>
</feature>
<feature type="chain" id="PRO_0000354998" description="Protein Turandot M">
    <location>
        <begin position="24"/>
        <end position="131"/>
    </location>
</feature>
<protein>
    <recommendedName>
        <fullName>Protein Turandot M</fullName>
    </recommendedName>
</protein>
<comment type="function">
    <text evidence="1">A humoral factor that may play a role in stress tolerance. Requires Mekk1 expression in the fat body to regulate response to septic injury and consequent immune response (By similarity).</text>
</comment>
<comment type="subcellular location">
    <subcellularLocation>
        <location evidence="1">Secreted</location>
    </subcellularLocation>
</comment>
<comment type="similarity">
    <text evidence="2">Belongs to the Turandot family.</text>
</comment>
<dbReference type="EMBL" id="CM000157">
    <property type="protein sequence ID" value="EDW88936.1"/>
    <property type="molecule type" value="Genomic_DNA"/>
</dbReference>
<dbReference type="RefSeq" id="XP_002089224.2">
    <property type="nucleotide sequence ID" value="XM_002089188.2"/>
</dbReference>
<dbReference type="SMR" id="B4P071"/>
<dbReference type="EnsemblMetazoa" id="FBtr0271906">
    <property type="protein sequence ID" value="FBpp0270398"/>
    <property type="gene ID" value="FBgn0242465"/>
</dbReference>
<dbReference type="EnsemblMetazoa" id="XM_039370515.2">
    <property type="protein sequence ID" value="XP_039226449.1"/>
    <property type="gene ID" value="LOC6528159"/>
</dbReference>
<dbReference type="EnsemblMetazoa" id="XM_039370516.2">
    <property type="protein sequence ID" value="XP_039226450.1"/>
    <property type="gene ID" value="LOC6528159"/>
</dbReference>
<dbReference type="KEGG" id="dya:Dyak_GE25388"/>
<dbReference type="HOGENOM" id="CLU_158853_0_0_1"/>
<dbReference type="OMA" id="HIFRRYK"/>
<dbReference type="OrthoDB" id="7855545at2759"/>
<dbReference type="PhylomeDB" id="B4P071"/>
<dbReference type="Proteomes" id="UP000002282">
    <property type="component" value="Chromosome 2L"/>
</dbReference>
<dbReference type="GO" id="GO:0005615">
    <property type="term" value="C:extracellular space"/>
    <property type="evidence" value="ECO:0000250"/>
    <property type="project" value="UniProtKB"/>
</dbReference>
<dbReference type="GO" id="GO:0034605">
    <property type="term" value="P:cellular response to heat"/>
    <property type="evidence" value="ECO:0007669"/>
    <property type="project" value="EnsemblMetazoa"/>
</dbReference>
<dbReference type="GO" id="GO:0050830">
    <property type="term" value="P:defense response to Gram-positive bacterium"/>
    <property type="evidence" value="ECO:0007669"/>
    <property type="project" value="EnsemblMetazoa"/>
</dbReference>
<dbReference type="GO" id="GO:0045087">
    <property type="term" value="P:innate immune response"/>
    <property type="evidence" value="ECO:0007669"/>
    <property type="project" value="UniProtKB-KW"/>
</dbReference>
<dbReference type="GO" id="GO:0009408">
    <property type="term" value="P:response to heat"/>
    <property type="evidence" value="ECO:0000250"/>
    <property type="project" value="UniProtKB"/>
</dbReference>
<dbReference type="InterPro" id="IPR010825">
    <property type="entry name" value="Turandot"/>
</dbReference>
<dbReference type="Pfam" id="PF07240">
    <property type="entry name" value="Turandot"/>
    <property type="match status" value="1"/>
</dbReference>
<evidence type="ECO:0000250" key="1">
    <source>
        <dbReference type="UniProtKB" id="Q9VMR8"/>
    </source>
</evidence>
<evidence type="ECO:0000255" key="2"/>
<evidence type="ECO:0000312" key="3">
    <source>
        <dbReference type="EMBL" id="EDW88936.1"/>
    </source>
</evidence>
<proteinExistence type="inferred from homology"/>